<accession>P35359</accession>
<accession>Q9PWN4</accession>
<sequence>MNGTEGPAFYVPMSNATGVVRSPYEYPQYYLVAPWAYGLLAAYMFFLIITGFPVNFLTLYVTIEHKKLRTPLNYILLNLAIADLFMVFGGFTTTMYTSLHGYFVFGRLGCNLEGFFATLGGEMGLWSLVVLAIERWMVVCKPVSNFRFGENHAIMGVAFTWVMACSCAVPPLVGWSRYIPEGMQCSCGVDYYTRTPGVNNESFVIYMFIVHFFIPLIVIFFCYGRLVCTVKEAAAQQQESETTQRAEREVTRMVIIMVIAFLICWLPYAGVAWYIFTHQGSEFGPVFMTLPAFFAKTSAVYNPCIYICMNKQFRHCMITTLCCGKNPFEEEEGASTTASKTEASSVSSSSVSPA</sequence>
<proteinExistence type="evidence at protein level"/>
<name>OPSD_DANRE</name>
<dbReference type="EMBL" id="L11014">
    <property type="protein sequence ID" value="AAA85566.1"/>
    <property type="molecule type" value="mRNA"/>
</dbReference>
<dbReference type="EMBL" id="AF105152">
    <property type="protein sequence ID" value="AAD14679.1"/>
    <property type="molecule type" value="mRNA"/>
</dbReference>
<dbReference type="EMBL" id="AF109368">
    <property type="protein sequence ID" value="AAD24751.1"/>
    <property type="molecule type" value="mRNA"/>
</dbReference>
<dbReference type="EMBL" id="AF331797">
    <property type="protein sequence ID" value="AAK01136.1"/>
    <property type="molecule type" value="Genomic_DNA"/>
</dbReference>
<dbReference type="EMBL" id="BC063938">
    <property type="protein sequence ID" value="AAH63938.1"/>
    <property type="molecule type" value="mRNA"/>
</dbReference>
<dbReference type="PIR" id="A48191">
    <property type="entry name" value="A48191"/>
</dbReference>
<dbReference type="RefSeq" id="NP_571159.2">
    <property type="nucleotide sequence ID" value="NM_131084.2"/>
</dbReference>
<dbReference type="SMR" id="P35359"/>
<dbReference type="FunCoup" id="P35359">
    <property type="interactions" value="372"/>
</dbReference>
<dbReference type="STRING" id="7955.ENSDARP00000011562"/>
<dbReference type="TCDB" id="9.A.14.1.12">
    <property type="family name" value="the g-protein-coupled receptor (gpcr) family"/>
</dbReference>
<dbReference type="GlyCosmos" id="P35359">
    <property type="glycosylation" value="3 sites, No reported glycans"/>
</dbReference>
<dbReference type="PaxDb" id="7955-ENSDARP00000011562"/>
<dbReference type="Ensembl" id="ENSDART00000027000">
    <property type="protein sequence ID" value="ENSDARP00000011562"/>
    <property type="gene ID" value="ENSDARG00000002193"/>
</dbReference>
<dbReference type="GeneID" id="30295"/>
<dbReference type="KEGG" id="dre:30295"/>
<dbReference type="AGR" id="ZFIN:ZDB-GENE-990415-271"/>
<dbReference type="CTD" id="6010"/>
<dbReference type="ZFIN" id="ZDB-GENE-990415-271">
    <property type="gene designation" value="rho"/>
</dbReference>
<dbReference type="eggNOG" id="KOG3656">
    <property type="taxonomic scope" value="Eukaryota"/>
</dbReference>
<dbReference type="HOGENOM" id="CLU_009579_3_0_1"/>
<dbReference type="InParanoid" id="P35359"/>
<dbReference type="OMA" id="EFGPLFM"/>
<dbReference type="OrthoDB" id="5962323at2759"/>
<dbReference type="PhylomeDB" id="P35359"/>
<dbReference type="TreeFam" id="TF324998"/>
<dbReference type="Reactome" id="R-DRE-2453902">
    <property type="pathway name" value="The canonical retinoid cycle in rods (twilight vision)"/>
</dbReference>
<dbReference type="Reactome" id="R-DRE-2485179">
    <property type="pathway name" value="Activation of the phototransduction cascade"/>
</dbReference>
<dbReference type="Reactome" id="R-DRE-2514859">
    <property type="pathway name" value="Inactivation, recovery and regulation of the phototransduction cascade"/>
</dbReference>
<dbReference type="Reactome" id="R-DRE-418594">
    <property type="pathway name" value="G alpha (i) signalling events"/>
</dbReference>
<dbReference type="Reactome" id="R-DRE-419771">
    <property type="pathway name" value="Opsins"/>
</dbReference>
<dbReference type="Reactome" id="R-DRE-5620916">
    <property type="pathway name" value="VxPx cargo-targeting to cilium"/>
</dbReference>
<dbReference type="PRO" id="PR:P35359"/>
<dbReference type="Proteomes" id="UP000000437">
    <property type="component" value="Chromosome 8"/>
</dbReference>
<dbReference type="Bgee" id="ENSDARG00000002193">
    <property type="expression patterns" value="Expressed in photoreceptor cell and 14 other cell types or tissues"/>
</dbReference>
<dbReference type="ExpressionAtlas" id="P35359">
    <property type="expression patterns" value="baseline and differential"/>
</dbReference>
<dbReference type="GO" id="GO:0016020">
    <property type="term" value="C:membrane"/>
    <property type="evidence" value="ECO:0000250"/>
    <property type="project" value="UniProtKB"/>
</dbReference>
<dbReference type="GO" id="GO:0097381">
    <property type="term" value="C:photoreceptor disc membrane"/>
    <property type="evidence" value="ECO:0000250"/>
    <property type="project" value="UniProtKB"/>
</dbReference>
<dbReference type="GO" id="GO:0001750">
    <property type="term" value="C:photoreceptor outer segment"/>
    <property type="evidence" value="ECO:0000314"/>
    <property type="project" value="ZFIN"/>
</dbReference>
<dbReference type="GO" id="GO:0005886">
    <property type="term" value="C:plasma membrane"/>
    <property type="evidence" value="ECO:0000250"/>
    <property type="project" value="UniProtKB"/>
</dbReference>
<dbReference type="GO" id="GO:0005502">
    <property type="term" value="F:11-cis retinal binding"/>
    <property type="evidence" value="ECO:0000250"/>
    <property type="project" value="UniProtKB"/>
</dbReference>
<dbReference type="GO" id="GO:0008020">
    <property type="term" value="F:G protein-coupled photoreceptor activity"/>
    <property type="evidence" value="ECO:0000314"/>
    <property type="project" value="ZFIN"/>
</dbReference>
<dbReference type="GO" id="GO:0009881">
    <property type="term" value="F:photoreceptor activity"/>
    <property type="evidence" value="ECO:0000314"/>
    <property type="project" value="ZFIN"/>
</dbReference>
<dbReference type="GO" id="GO:0016918">
    <property type="term" value="F:retinal binding"/>
    <property type="evidence" value="ECO:0000314"/>
    <property type="project" value="ZFIN"/>
</dbReference>
<dbReference type="GO" id="GO:0016038">
    <property type="term" value="P:absorption of visible light"/>
    <property type="evidence" value="ECO:0000314"/>
    <property type="project" value="ZFIN"/>
</dbReference>
<dbReference type="GO" id="GO:0071482">
    <property type="term" value="P:cellular response to light stimulus"/>
    <property type="evidence" value="ECO:0000318"/>
    <property type="project" value="GO_Central"/>
</dbReference>
<dbReference type="GO" id="GO:0009583">
    <property type="term" value="P:detection of light stimulus"/>
    <property type="evidence" value="ECO:0000314"/>
    <property type="project" value="ZFIN"/>
</dbReference>
<dbReference type="GO" id="GO:0016056">
    <property type="term" value="P:G protein-coupled opsin signaling pathway"/>
    <property type="evidence" value="ECO:0000250"/>
    <property type="project" value="UniProtKB"/>
</dbReference>
<dbReference type="GO" id="GO:0007186">
    <property type="term" value="P:G protein-coupled receptor signaling pathway"/>
    <property type="evidence" value="ECO:0000318"/>
    <property type="project" value="GO_Central"/>
</dbReference>
<dbReference type="GO" id="GO:0007602">
    <property type="term" value="P:phototransduction"/>
    <property type="evidence" value="ECO:0000318"/>
    <property type="project" value="GO_Central"/>
</dbReference>
<dbReference type="GO" id="GO:0007601">
    <property type="term" value="P:visual perception"/>
    <property type="evidence" value="ECO:0007669"/>
    <property type="project" value="UniProtKB-KW"/>
</dbReference>
<dbReference type="CDD" id="cd15080">
    <property type="entry name" value="7tmA_MWS_opsin"/>
    <property type="match status" value="1"/>
</dbReference>
<dbReference type="FunFam" id="1.20.1070.10:FF:000018">
    <property type="entry name" value="Rhodopsin"/>
    <property type="match status" value="1"/>
</dbReference>
<dbReference type="Gene3D" id="1.20.1070.10">
    <property type="entry name" value="Rhodopsin 7-helix transmembrane proteins"/>
    <property type="match status" value="1"/>
</dbReference>
<dbReference type="InterPro" id="IPR050125">
    <property type="entry name" value="GPCR_opsins"/>
</dbReference>
<dbReference type="InterPro" id="IPR000276">
    <property type="entry name" value="GPCR_Rhodpsn"/>
</dbReference>
<dbReference type="InterPro" id="IPR017452">
    <property type="entry name" value="GPCR_Rhodpsn_7TM"/>
</dbReference>
<dbReference type="InterPro" id="IPR001760">
    <property type="entry name" value="Opsin"/>
</dbReference>
<dbReference type="InterPro" id="IPR027430">
    <property type="entry name" value="Retinal_BS"/>
</dbReference>
<dbReference type="InterPro" id="IPR000732">
    <property type="entry name" value="Rhodopsin"/>
</dbReference>
<dbReference type="InterPro" id="IPR019477">
    <property type="entry name" value="Rhodopsin_N"/>
</dbReference>
<dbReference type="PANTHER" id="PTHR24240">
    <property type="entry name" value="OPSIN"/>
    <property type="match status" value="1"/>
</dbReference>
<dbReference type="Pfam" id="PF00001">
    <property type="entry name" value="7tm_1"/>
    <property type="match status" value="1"/>
</dbReference>
<dbReference type="Pfam" id="PF10413">
    <property type="entry name" value="Rhodopsin_N"/>
    <property type="match status" value="1"/>
</dbReference>
<dbReference type="PRINTS" id="PR00237">
    <property type="entry name" value="GPCRRHODOPSN"/>
</dbReference>
<dbReference type="PRINTS" id="PR00238">
    <property type="entry name" value="OPSIN"/>
</dbReference>
<dbReference type="PRINTS" id="PR00579">
    <property type="entry name" value="RHODOPSIN"/>
</dbReference>
<dbReference type="SUPFAM" id="SSF81321">
    <property type="entry name" value="Family A G protein-coupled receptor-like"/>
    <property type="match status" value="1"/>
</dbReference>
<dbReference type="PROSITE" id="PS00237">
    <property type="entry name" value="G_PROTEIN_RECEP_F1_1"/>
    <property type="match status" value="1"/>
</dbReference>
<dbReference type="PROSITE" id="PS50262">
    <property type="entry name" value="G_PROTEIN_RECEP_F1_2"/>
    <property type="match status" value="1"/>
</dbReference>
<dbReference type="PROSITE" id="PS00238">
    <property type="entry name" value="OPSIN"/>
    <property type="match status" value="1"/>
</dbReference>
<keyword id="KW-0966">Cell projection</keyword>
<keyword id="KW-0157">Chromophore</keyword>
<keyword id="KW-1015">Disulfide bond</keyword>
<keyword id="KW-0297">G-protein coupled receptor</keyword>
<keyword id="KW-0325">Glycoprotein</keyword>
<keyword id="KW-0472">Membrane</keyword>
<keyword id="KW-0597">Phosphoprotein</keyword>
<keyword id="KW-0600">Photoreceptor protein</keyword>
<keyword id="KW-0675">Receptor</keyword>
<keyword id="KW-1185">Reference proteome</keyword>
<keyword id="KW-0681">Retinal protein</keyword>
<keyword id="KW-0716">Sensory transduction</keyword>
<keyword id="KW-0807">Transducer</keyword>
<keyword id="KW-0812">Transmembrane</keyword>
<keyword id="KW-1133">Transmembrane helix</keyword>
<keyword id="KW-0844">Vision</keyword>
<reference key="1">
    <citation type="journal article" date="1993" name="Proc. Natl. Acad. Sci. U.S.A.">
        <title>Zebrafish ultraviolet visual pigment: absorption spectrum, sequence, and localization.</title>
        <authorList>
            <person name="Robinson J."/>
            <person name="Schmitt E.A."/>
            <person name="Harosi F.I."/>
            <person name="Reece R.J."/>
            <person name="Dowling J.E."/>
        </authorList>
    </citation>
    <scope>NUCLEOTIDE SEQUENCE [MRNA]</scope>
    <scope>TISSUE SPECIFICITY</scope>
    <source>
        <tissue>Eye</tissue>
    </source>
</reference>
<reference key="2">
    <citation type="journal article" date="1995" name="Vis. Neurosci.">
        <title>Temporal and spatial patterns of opsin gene expression in zebrafish (Danio rerio).</title>
        <authorList>
            <person name="Robinson J."/>
            <person name="Schmitt E.A."/>
            <person name="Dowling J.E."/>
        </authorList>
    </citation>
    <scope>NUCLEOTIDE SEQUENCE [MRNA]</scope>
    <scope>DEVELOPMENTAL STAGE</scope>
</reference>
<reference key="3">
    <citation type="journal article" date="1999" name="Vis. Neurosci.">
        <authorList>
            <person name="Schmitt E.A."/>
            <person name="Hyatt G.A."/>
            <person name="Dowling J.E."/>
        </authorList>
    </citation>
    <scope>ERRATUM OF PUBMED:8924413</scope>
</reference>
<reference key="4">
    <citation type="journal article" date="1999" name="Vis. Neurosci.">
        <title>Cloning and characterization of six zebrafish photoreceptor opsin cDNAs and immunolocalization of their corresponding proteins.</title>
        <authorList>
            <person name="Vihtelic T.S."/>
            <person name="Doro C.J."/>
            <person name="Hyde D.R."/>
        </authorList>
    </citation>
    <scope>NUCLEOTIDE SEQUENCE [MRNA]</scope>
    <scope>TISSUE SPECIFICITY</scope>
    <scope>SUBCELLULAR LOCATION</scope>
    <source>
        <tissue>Eye</tissue>
    </source>
</reference>
<reference key="5">
    <citation type="journal article" date="2001" name="J. Biol. Chem.">
        <title>Isolation of a zebrafish rod opsin promoter to generate a transgenic zebrafish line expressing enhanced green fluorescent protein in rod photoreceptors.</title>
        <authorList>
            <person name="Kennedy B.N."/>
            <person name="Vihtelic T.S."/>
            <person name="Checkley L."/>
            <person name="Vaughan K.T."/>
            <person name="Hyde D.R."/>
        </authorList>
    </citation>
    <scope>NUCLEOTIDE SEQUENCE [GENOMIC DNA]</scope>
    <scope>TISSUE SPECIFICITY</scope>
</reference>
<reference key="6">
    <citation type="submission" date="2003-12" db="EMBL/GenBank/DDBJ databases">
        <authorList>
            <consortium name="NIH - Zebrafish Gene Collection (ZGC) project"/>
        </authorList>
    </citation>
    <scope>NUCLEOTIDE SEQUENCE [LARGE SCALE MRNA]</scope>
    <source>
        <strain>AB</strain>
    </source>
</reference>
<reference key="7">
    <citation type="journal article" date="1996" name="Invest. Ophthalmol. Vis. Sci.">
        <title>The zebrafish ultraviolet cone opsin reported previously is expressed in rods.</title>
        <authorList>
            <person name="Raymond P.A."/>
            <person name="Barthel L.K."/>
            <person name="Stenkamp D.L."/>
        </authorList>
    </citation>
    <scope>IDENTIFICATION AS RHODOPSIN</scope>
    <scope>TISSUE SPECIFICITY</scope>
</reference>
<comment type="function">
    <text evidence="1 2 3">Photoreceptor required for image-forming vision at low light intensity. While most salt water fish species use retinal as chromophore, most freshwater fish use 3-dehydroretinal, or a mixture of retinal and 3-dehydroretinal (By similarity). Light-induced isomerization of 11-cis to all-trans retinal triggers a conformational change that activates signaling via G-proteins. Subsequent receptor phosphorylation mediates displacement of the bound G-protein alpha subunit by arrestin and terminates signaling (By similarity).</text>
</comment>
<comment type="subcellular location">
    <subcellularLocation>
        <location evidence="2">Membrane</location>
        <topology evidence="2">Multi-pass membrane protein</topology>
    </subcellularLocation>
    <subcellularLocation>
        <location evidence="7">Cell projection</location>
        <location evidence="7">Cilium</location>
        <location evidence="7">Photoreceptor outer segment</location>
    </subcellularLocation>
    <text evidence="2">Synthesized in the inner segment (IS) of rod photoreceptor cells before vectorial transport to disk membranes in the rod outer segment (OS) photosensory cilia.</text>
</comment>
<comment type="tissue specificity">
    <text evidence="7 8 9">Retinal rod photoreceptor cells, predominantly in the outer segments (at protein level) (PubMed:10349976). Retinal rod photoreceptor cells (PubMed:8327475, PubMed:8603882).</text>
</comment>
<comment type="developmental stage">
    <text evidence="10">First detected at 51 hours post-fertilization (hpf) in the ventral retina. At 60 hpf, expressed in a strip across the ventrotemporal retina. By 96 hpf, also expressed in the dorsal retina.</text>
</comment>
<comment type="PTM">
    <text evidence="1">Phosphorylated on some or all of the serine and threonine residues present in the C-terminal region.</text>
</comment>
<comment type="PTM">
    <text evidence="1">Contains one covalently linked retinal chromophore.</text>
</comment>
<comment type="similarity">
    <text evidence="5">Belongs to the G-protein coupled receptor 1 family. Opsin subfamily.</text>
</comment>
<comment type="caution">
    <text evidence="11">Was originally (PubMed:8327475, PubMed:8924413) thought to be an ultraviolet-sensitive opsin present in short single cones.</text>
</comment>
<feature type="chain" id="PRO_0000197654" description="Rhodopsin">
    <location>
        <begin position="1"/>
        <end position="354"/>
    </location>
</feature>
<feature type="topological domain" description="Extracellular" evidence="11">
    <location>
        <begin position="1"/>
        <end position="36"/>
    </location>
</feature>
<feature type="transmembrane region" description="Helical; Name=1" evidence="1">
    <location>
        <begin position="37"/>
        <end position="61"/>
    </location>
</feature>
<feature type="topological domain" description="Cytoplasmic" evidence="11">
    <location>
        <begin position="62"/>
        <end position="73"/>
    </location>
</feature>
<feature type="transmembrane region" description="Helical; Name=2" evidence="1">
    <location>
        <begin position="74"/>
        <end position="96"/>
    </location>
</feature>
<feature type="topological domain" description="Extracellular" evidence="11">
    <location>
        <begin position="97"/>
        <end position="110"/>
    </location>
</feature>
<feature type="transmembrane region" description="Helical; Name=3" evidence="1">
    <location>
        <begin position="111"/>
        <end position="133"/>
    </location>
</feature>
<feature type="topological domain" description="Cytoplasmic" evidence="11">
    <location>
        <begin position="134"/>
        <end position="152"/>
    </location>
</feature>
<feature type="transmembrane region" description="Helical; Name=4" evidence="1">
    <location>
        <begin position="153"/>
        <end position="173"/>
    </location>
</feature>
<feature type="topological domain" description="Extracellular" evidence="11">
    <location>
        <begin position="174"/>
        <end position="202"/>
    </location>
</feature>
<feature type="transmembrane region" description="Helical; Name=5" evidence="1">
    <location>
        <begin position="203"/>
        <end position="224"/>
    </location>
</feature>
<feature type="topological domain" description="Cytoplasmic" evidence="11">
    <location>
        <begin position="225"/>
        <end position="252"/>
    </location>
</feature>
<feature type="transmembrane region" description="Helical; Name=6" evidence="1">
    <location>
        <begin position="253"/>
        <end position="274"/>
    </location>
</feature>
<feature type="topological domain" description="Extracellular" evidence="11">
    <location>
        <begin position="275"/>
        <end position="286"/>
    </location>
</feature>
<feature type="transmembrane region" description="Helical; Name=7" evidence="1">
    <location>
        <begin position="287"/>
        <end position="308"/>
    </location>
</feature>
<feature type="topological domain" description="Cytoplasmic" evidence="11">
    <location>
        <begin position="309"/>
        <end position="354"/>
    </location>
</feature>
<feature type="region of interest" description="Disordered" evidence="6">
    <location>
        <begin position="333"/>
        <end position="354"/>
    </location>
</feature>
<feature type="short sequence motif" description="'Ionic lock' involved in activated form stabilization" evidence="1">
    <location>
        <begin position="134"/>
        <end position="136"/>
    </location>
</feature>
<feature type="compositionally biased region" description="Low complexity" evidence="6">
    <location>
        <begin position="334"/>
        <end position="354"/>
    </location>
</feature>
<feature type="site" description="Plays an important role in the conformation switch to the active conformation" evidence="1">
    <location>
        <position position="113"/>
    </location>
</feature>
<feature type="modified residue" description="N6-(retinylidene)lysine" evidence="1">
    <location>
        <position position="296"/>
    </location>
</feature>
<feature type="glycosylation site" description="N-linked (GlcNAc...) asparagine" evidence="4">
    <location>
        <position position="2"/>
    </location>
</feature>
<feature type="glycosylation site" description="N-linked (GlcNAc...) asparagine" evidence="4">
    <location>
        <position position="15"/>
    </location>
</feature>
<feature type="glycosylation site" description="N-linked (GlcNAc...) asparagine" evidence="4">
    <location>
        <position position="200"/>
    </location>
</feature>
<feature type="disulfide bond" evidence="5">
    <location>
        <begin position="110"/>
        <end position="187"/>
    </location>
</feature>
<feature type="sequence conflict" description="In Ref. 1 and 2." evidence="11" ref="1 2">
    <original>LL</original>
    <variation>FV</variation>
    <location>
        <begin position="39"/>
        <end position="40"/>
    </location>
</feature>
<feature type="sequence conflict" description="In Ref. 1 and 2." evidence="11" ref="1 2">
    <original>W</original>
    <variation>K</variation>
    <location>
        <position position="126"/>
    </location>
</feature>
<feature type="sequence conflict" description="In Ref. 1 and 2." evidence="11" ref="1 2">
    <original>A</original>
    <variation>R</variation>
    <location>
        <position position="235"/>
    </location>
</feature>
<evidence type="ECO:0000250" key="1">
    <source>
        <dbReference type="UniProtKB" id="P02699"/>
    </source>
</evidence>
<evidence type="ECO:0000250" key="2">
    <source>
        <dbReference type="UniProtKB" id="P08100"/>
    </source>
</evidence>
<evidence type="ECO:0000250" key="3">
    <source>
        <dbReference type="UniProtKB" id="P32309"/>
    </source>
</evidence>
<evidence type="ECO:0000255" key="4"/>
<evidence type="ECO:0000255" key="5">
    <source>
        <dbReference type="PROSITE-ProRule" id="PRU00521"/>
    </source>
</evidence>
<evidence type="ECO:0000256" key="6">
    <source>
        <dbReference type="SAM" id="MobiDB-lite"/>
    </source>
</evidence>
<evidence type="ECO:0000269" key="7">
    <source>
    </source>
</evidence>
<evidence type="ECO:0000269" key="8">
    <source>
    </source>
</evidence>
<evidence type="ECO:0000269" key="9">
    <source>
    </source>
</evidence>
<evidence type="ECO:0000269" key="10">
    <source>
    </source>
</evidence>
<evidence type="ECO:0000305" key="11"/>
<gene>
    <name type="primary">rho</name>
    <name type="synonym">zfo2</name>
</gene>
<protein>
    <recommendedName>
        <fullName>Rhodopsin</fullName>
    </recommendedName>
</protein>
<organism>
    <name type="scientific">Danio rerio</name>
    <name type="common">Zebrafish</name>
    <name type="synonym">Brachydanio rerio</name>
    <dbReference type="NCBI Taxonomy" id="7955"/>
    <lineage>
        <taxon>Eukaryota</taxon>
        <taxon>Metazoa</taxon>
        <taxon>Chordata</taxon>
        <taxon>Craniata</taxon>
        <taxon>Vertebrata</taxon>
        <taxon>Euteleostomi</taxon>
        <taxon>Actinopterygii</taxon>
        <taxon>Neopterygii</taxon>
        <taxon>Teleostei</taxon>
        <taxon>Ostariophysi</taxon>
        <taxon>Cypriniformes</taxon>
        <taxon>Danionidae</taxon>
        <taxon>Danioninae</taxon>
        <taxon>Danio</taxon>
    </lineage>
</organism>